<protein>
    <recommendedName>
        <fullName>Caveolin-2</fullName>
    </recommendedName>
</protein>
<name>CAV2_RAT</name>
<dbReference type="EMBL" id="AF439780">
    <property type="protein sequence ID" value="AAL33581.1"/>
    <property type="molecule type" value="mRNA"/>
</dbReference>
<dbReference type="EMBL" id="DP000027">
    <property type="protein sequence ID" value="AAR16307.1"/>
    <property type="molecule type" value="Genomic_DNA"/>
</dbReference>
<dbReference type="EMBL" id="BC062059">
    <property type="protein sequence ID" value="AAH62059.1"/>
    <property type="molecule type" value="mRNA"/>
</dbReference>
<dbReference type="RefSeq" id="NP_571989.2">
    <property type="nucleotide sequence ID" value="NM_131914.2"/>
</dbReference>
<dbReference type="SMR" id="Q2IBC5"/>
<dbReference type="BioGRID" id="264175">
    <property type="interactions" value="4"/>
</dbReference>
<dbReference type="CORUM" id="Q2IBC5"/>
<dbReference type="FunCoup" id="Q2IBC5">
    <property type="interactions" value="769"/>
</dbReference>
<dbReference type="IntAct" id="Q2IBC5">
    <property type="interactions" value="1"/>
</dbReference>
<dbReference type="STRING" id="10116.ENSRNOP00000075024"/>
<dbReference type="iPTMnet" id="Q2IBC5"/>
<dbReference type="PhosphoSitePlus" id="Q2IBC5"/>
<dbReference type="SwissPalm" id="Q2IBC5"/>
<dbReference type="PaxDb" id="10116-ENSRNOP00000008722"/>
<dbReference type="GeneID" id="363425"/>
<dbReference type="KEGG" id="rno:363425"/>
<dbReference type="UCSC" id="RGD:620348">
    <property type="organism name" value="rat"/>
</dbReference>
<dbReference type="AGR" id="RGD:620348"/>
<dbReference type="CTD" id="858"/>
<dbReference type="RGD" id="620348">
    <property type="gene designation" value="Cav2"/>
</dbReference>
<dbReference type="eggNOG" id="ENOG502RZYX">
    <property type="taxonomic scope" value="Eukaryota"/>
</dbReference>
<dbReference type="InParanoid" id="Q2IBC5"/>
<dbReference type="OrthoDB" id="5917823at2759"/>
<dbReference type="PhylomeDB" id="Q2IBC5"/>
<dbReference type="TreeFam" id="TF315736"/>
<dbReference type="Reactome" id="R-RNO-9009391">
    <property type="pathway name" value="Extra-nuclear estrogen signaling"/>
</dbReference>
<dbReference type="PRO" id="PR:Q2IBC5"/>
<dbReference type="Proteomes" id="UP000002494">
    <property type="component" value="Unplaced"/>
</dbReference>
<dbReference type="GO" id="GO:0002080">
    <property type="term" value="C:acrosomal membrane"/>
    <property type="evidence" value="ECO:0000266"/>
    <property type="project" value="RGD"/>
</dbReference>
<dbReference type="GO" id="GO:0005901">
    <property type="term" value="C:caveola"/>
    <property type="evidence" value="ECO:0000314"/>
    <property type="project" value="RGD"/>
</dbReference>
<dbReference type="GO" id="GO:0002095">
    <property type="term" value="C:caveolar macromolecular signaling complex"/>
    <property type="evidence" value="ECO:0000266"/>
    <property type="project" value="RGD"/>
</dbReference>
<dbReference type="GO" id="GO:0009986">
    <property type="term" value="C:cell surface"/>
    <property type="evidence" value="ECO:0000314"/>
    <property type="project" value="RGD"/>
</dbReference>
<dbReference type="GO" id="GO:0031410">
    <property type="term" value="C:cytoplasmic vesicle"/>
    <property type="evidence" value="ECO:0000266"/>
    <property type="project" value="RGD"/>
</dbReference>
<dbReference type="GO" id="GO:0005925">
    <property type="term" value="C:focal adhesion"/>
    <property type="evidence" value="ECO:0000266"/>
    <property type="project" value="RGD"/>
</dbReference>
<dbReference type="GO" id="GO:0005794">
    <property type="term" value="C:Golgi apparatus"/>
    <property type="evidence" value="ECO:0000314"/>
    <property type="project" value="BHF-UCL"/>
</dbReference>
<dbReference type="GO" id="GO:0000139">
    <property type="term" value="C:Golgi membrane"/>
    <property type="evidence" value="ECO:0007669"/>
    <property type="project" value="UniProtKB-SubCell"/>
</dbReference>
<dbReference type="GO" id="GO:0005811">
    <property type="term" value="C:lipid droplet"/>
    <property type="evidence" value="ECO:0000314"/>
    <property type="project" value="RGD"/>
</dbReference>
<dbReference type="GO" id="GO:0016020">
    <property type="term" value="C:membrane"/>
    <property type="evidence" value="ECO:0000266"/>
    <property type="project" value="RGD"/>
</dbReference>
<dbReference type="GO" id="GO:0045121">
    <property type="term" value="C:membrane raft"/>
    <property type="evidence" value="ECO:0000314"/>
    <property type="project" value="BHF-UCL"/>
</dbReference>
<dbReference type="GO" id="GO:0005635">
    <property type="term" value="C:nuclear envelope"/>
    <property type="evidence" value="ECO:0000314"/>
    <property type="project" value="BHF-UCL"/>
</dbReference>
<dbReference type="GO" id="GO:0005637">
    <property type="term" value="C:nuclear inner membrane"/>
    <property type="evidence" value="ECO:0000314"/>
    <property type="project" value="BHF-UCL"/>
</dbReference>
<dbReference type="GO" id="GO:0048471">
    <property type="term" value="C:perinuclear region of cytoplasm"/>
    <property type="evidence" value="ECO:0000250"/>
    <property type="project" value="UniProtKB"/>
</dbReference>
<dbReference type="GO" id="GO:0005886">
    <property type="term" value="C:plasma membrane"/>
    <property type="evidence" value="ECO:0000314"/>
    <property type="project" value="BHF-UCL"/>
</dbReference>
<dbReference type="GO" id="GO:0044853">
    <property type="term" value="C:plasma membrane raft"/>
    <property type="evidence" value="ECO:0000250"/>
    <property type="project" value="UniProtKB"/>
</dbReference>
<dbReference type="GO" id="GO:0032991">
    <property type="term" value="C:protein-containing complex"/>
    <property type="evidence" value="ECO:0000314"/>
    <property type="project" value="RGD"/>
</dbReference>
<dbReference type="GO" id="GO:0045202">
    <property type="term" value="C:synapse"/>
    <property type="evidence" value="ECO:0007669"/>
    <property type="project" value="GOC"/>
</dbReference>
<dbReference type="GO" id="GO:0031748">
    <property type="term" value="F:D1 dopamine receptor binding"/>
    <property type="evidence" value="ECO:0000250"/>
    <property type="project" value="UniProtKB"/>
</dbReference>
<dbReference type="GO" id="GO:0031435">
    <property type="term" value="F:mitogen-activated protein kinase kinase kinase binding"/>
    <property type="evidence" value="ECO:0000353"/>
    <property type="project" value="BHF-UCL"/>
</dbReference>
<dbReference type="GO" id="GO:0060090">
    <property type="term" value="F:molecular adaptor activity"/>
    <property type="evidence" value="ECO:0000266"/>
    <property type="project" value="RGD"/>
</dbReference>
<dbReference type="GO" id="GO:0051219">
    <property type="term" value="F:phosphoprotein binding"/>
    <property type="evidence" value="ECO:0000353"/>
    <property type="project" value="RGD"/>
</dbReference>
<dbReference type="GO" id="GO:0046982">
    <property type="term" value="F:protein heterodimerization activity"/>
    <property type="evidence" value="ECO:0000266"/>
    <property type="project" value="RGD"/>
</dbReference>
<dbReference type="GO" id="GO:0042803">
    <property type="term" value="F:protein homodimerization activity"/>
    <property type="evidence" value="ECO:0000266"/>
    <property type="project" value="RGD"/>
</dbReference>
<dbReference type="GO" id="GO:0019901">
    <property type="term" value="F:protein kinase binding"/>
    <property type="evidence" value="ECO:0000266"/>
    <property type="project" value="RGD"/>
</dbReference>
<dbReference type="GO" id="GO:0030674">
    <property type="term" value="F:protein-macromolecule adaptor activity"/>
    <property type="evidence" value="ECO:0000266"/>
    <property type="project" value="RGD"/>
</dbReference>
<dbReference type="GO" id="GO:0097110">
    <property type="term" value="F:scaffold protein binding"/>
    <property type="evidence" value="ECO:0000266"/>
    <property type="project" value="RGD"/>
</dbReference>
<dbReference type="GO" id="GO:0000149">
    <property type="term" value="F:SNARE binding"/>
    <property type="evidence" value="ECO:0000314"/>
    <property type="project" value="RGD"/>
</dbReference>
<dbReference type="GO" id="GO:0019905">
    <property type="term" value="F:syntaxin binding"/>
    <property type="evidence" value="ECO:0000314"/>
    <property type="project" value="RGD"/>
</dbReference>
<dbReference type="GO" id="GO:0071711">
    <property type="term" value="P:basement membrane organization"/>
    <property type="evidence" value="ECO:0000266"/>
    <property type="project" value="RGD"/>
</dbReference>
<dbReference type="GO" id="GO:0070836">
    <property type="term" value="P:caveola assembly"/>
    <property type="evidence" value="ECO:0000250"/>
    <property type="project" value="UniProtKB"/>
</dbReference>
<dbReference type="GO" id="GO:0030154">
    <property type="term" value="P:cell differentiation"/>
    <property type="evidence" value="ECO:0000318"/>
    <property type="project" value="GO_Central"/>
</dbReference>
<dbReference type="GO" id="GO:0008283">
    <property type="term" value="P:cell population proliferation"/>
    <property type="evidence" value="ECO:0000266"/>
    <property type="project" value="RGD"/>
</dbReference>
<dbReference type="GO" id="GO:0007268">
    <property type="term" value="P:chemical synaptic transmission"/>
    <property type="evidence" value="ECO:0000314"/>
    <property type="project" value="RGD"/>
</dbReference>
<dbReference type="GO" id="GO:0007029">
    <property type="term" value="P:endoplasmic reticulum organization"/>
    <property type="evidence" value="ECO:0000250"/>
    <property type="project" value="UniProtKB"/>
</dbReference>
<dbReference type="GO" id="GO:0001935">
    <property type="term" value="P:endothelial cell proliferation"/>
    <property type="evidence" value="ECO:0000266"/>
    <property type="project" value="RGD"/>
</dbReference>
<dbReference type="GO" id="GO:0008286">
    <property type="term" value="P:insulin receptor signaling pathway"/>
    <property type="evidence" value="ECO:0000314"/>
    <property type="project" value="BHF-UCL"/>
</dbReference>
<dbReference type="GO" id="GO:0007005">
    <property type="term" value="P:mitochondrion organization"/>
    <property type="evidence" value="ECO:0000250"/>
    <property type="project" value="UniProtKB"/>
</dbReference>
<dbReference type="GO" id="GO:0001937">
    <property type="term" value="P:negative regulation of endothelial cell proliferation"/>
    <property type="evidence" value="ECO:0000315"/>
    <property type="project" value="RGD"/>
</dbReference>
<dbReference type="GO" id="GO:0014859">
    <property type="term" value="P:negative regulation of skeletal muscle cell proliferation"/>
    <property type="evidence" value="ECO:0000266"/>
    <property type="project" value="RGD"/>
</dbReference>
<dbReference type="GO" id="GO:0030512">
    <property type="term" value="P:negative regulation of transforming growth factor beta receptor signaling pathway"/>
    <property type="evidence" value="ECO:0000266"/>
    <property type="project" value="RGD"/>
</dbReference>
<dbReference type="GO" id="GO:0044794">
    <property type="term" value="P:positive regulation by host of viral process"/>
    <property type="evidence" value="ECO:0000266"/>
    <property type="project" value="RGD"/>
</dbReference>
<dbReference type="GO" id="GO:0060161">
    <property type="term" value="P:positive regulation of dopamine receptor signaling pathway"/>
    <property type="evidence" value="ECO:0000250"/>
    <property type="project" value="UniProtKB"/>
</dbReference>
<dbReference type="GO" id="GO:0001938">
    <property type="term" value="P:positive regulation of endothelial cell proliferation"/>
    <property type="evidence" value="ECO:0000266"/>
    <property type="project" value="RGD"/>
</dbReference>
<dbReference type="GO" id="GO:0043410">
    <property type="term" value="P:positive regulation of MAPK cascade"/>
    <property type="evidence" value="ECO:0000314"/>
    <property type="project" value="BHF-UCL"/>
</dbReference>
<dbReference type="GO" id="GO:1900182">
    <property type="term" value="P:positive regulation of protein localization to nucleus"/>
    <property type="evidence" value="ECO:0000314"/>
    <property type="project" value="BHF-UCL"/>
</dbReference>
<dbReference type="GO" id="GO:0019065">
    <property type="term" value="P:receptor-mediated endocytosis of virus by host cell"/>
    <property type="evidence" value="ECO:0000266"/>
    <property type="project" value="RGD"/>
</dbReference>
<dbReference type="GO" id="GO:0051480">
    <property type="term" value="P:regulation of cytosolic calcium ion concentration"/>
    <property type="evidence" value="ECO:0000318"/>
    <property type="project" value="GO_Central"/>
</dbReference>
<dbReference type="GO" id="GO:0007088">
    <property type="term" value="P:regulation of mitotic nuclear division"/>
    <property type="evidence" value="ECO:0000266"/>
    <property type="project" value="RGD"/>
</dbReference>
<dbReference type="GO" id="GO:0014856">
    <property type="term" value="P:skeletal muscle cell proliferation"/>
    <property type="evidence" value="ECO:0000266"/>
    <property type="project" value="RGD"/>
</dbReference>
<dbReference type="GO" id="GO:0048741">
    <property type="term" value="P:skeletal muscle fiber development"/>
    <property type="evidence" value="ECO:0000250"/>
    <property type="project" value="UniProtKB"/>
</dbReference>
<dbReference type="GO" id="GO:0007179">
    <property type="term" value="P:transforming growth factor beta receptor signaling pathway"/>
    <property type="evidence" value="ECO:0000266"/>
    <property type="project" value="RGD"/>
</dbReference>
<dbReference type="GO" id="GO:0048278">
    <property type="term" value="P:vesicle docking"/>
    <property type="evidence" value="ECO:0000250"/>
    <property type="project" value="UniProtKB"/>
</dbReference>
<dbReference type="GO" id="GO:0006906">
    <property type="term" value="P:vesicle fusion"/>
    <property type="evidence" value="ECO:0000250"/>
    <property type="project" value="UniProtKB"/>
</dbReference>
<dbReference type="GO" id="GO:0016050">
    <property type="term" value="P:vesicle organization"/>
    <property type="evidence" value="ECO:0000266"/>
    <property type="project" value="RGD"/>
</dbReference>
<dbReference type="GO" id="GO:0019076">
    <property type="term" value="P:viral release from host cell"/>
    <property type="evidence" value="ECO:0000266"/>
    <property type="project" value="RGD"/>
</dbReference>
<dbReference type="InterPro" id="IPR001612">
    <property type="entry name" value="Caveolin"/>
</dbReference>
<dbReference type="InterPro" id="IPR018361">
    <property type="entry name" value="Caveolin_CS"/>
</dbReference>
<dbReference type="PANTHER" id="PTHR10844">
    <property type="entry name" value="CAVEOLIN"/>
    <property type="match status" value="1"/>
</dbReference>
<dbReference type="PANTHER" id="PTHR10844:SF3">
    <property type="entry name" value="CAVEOLIN-2"/>
    <property type="match status" value="1"/>
</dbReference>
<dbReference type="Pfam" id="PF01146">
    <property type="entry name" value="Caveolin"/>
    <property type="match status" value="1"/>
</dbReference>
<dbReference type="PROSITE" id="PS01210">
    <property type="entry name" value="CAVEOLIN"/>
    <property type="match status" value="1"/>
</dbReference>
<reference key="1">
    <citation type="journal article" date="2002" name="Biochem. Biophys. Res. Commun.">
        <title>ATP dependence of the SNARE/caveolin 1 interaction in the hippocampus.</title>
        <authorList>
            <person name="Magga J.M."/>
            <person name="Kay J.G."/>
            <person name="Davy A."/>
            <person name="Poulton N.P."/>
            <person name="Robbins S.M."/>
            <person name="Braun J.E.A."/>
        </authorList>
    </citation>
    <scope>NUCLEOTIDE SEQUENCE [MRNA]</scope>
    <source>
        <strain>Sprague-Dawley</strain>
    </source>
</reference>
<reference key="2">
    <citation type="journal article" date="2003" name="Nature">
        <title>Comparative analyses of multi-species sequences from targeted genomic regions.</title>
        <authorList>
            <person name="Thomas J.W."/>
            <person name="Touchman J.W."/>
            <person name="Blakesley R.W."/>
            <person name="Bouffard G.G."/>
            <person name="Beckstrom-Sternberg S.M."/>
            <person name="Margulies E.H."/>
            <person name="Blanchette M."/>
            <person name="Siepel A.C."/>
            <person name="Thomas P.J."/>
            <person name="McDowell J.C."/>
            <person name="Maskeri B."/>
            <person name="Hansen N.F."/>
            <person name="Schwartz M.S."/>
            <person name="Weber R.J."/>
            <person name="Kent W.J."/>
            <person name="Karolchik D."/>
            <person name="Bruen T.C."/>
            <person name="Bevan R."/>
            <person name="Cutler D.J."/>
            <person name="Schwartz S."/>
            <person name="Elnitski L."/>
            <person name="Idol J.R."/>
            <person name="Prasad A.B."/>
            <person name="Lee-Lin S.-Q."/>
            <person name="Maduro V.V.B."/>
            <person name="Summers T.J."/>
            <person name="Portnoy M.E."/>
            <person name="Dietrich N.L."/>
            <person name="Akhter N."/>
            <person name="Ayele K."/>
            <person name="Benjamin B."/>
            <person name="Cariaga K."/>
            <person name="Brinkley C.P."/>
            <person name="Brooks S.Y."/>
            <person name="Granite S."/>
            <person name="Guan X."/>
            <person name="Gupta J."/>
            <person name="Haghighi P."/>
            <person name="Ho S.-L."/>
            <person name="Huang M.C."/>
            <person name="Karlins E."/>
            <person name="Laric P.L."/>
            <person name="Legaspi R."/>
            <person name="Lim M.J."/>
            <person name="Maduro Q.L."/>
            <person name="Masiello C.A."/>
            <person name="Mastrian S.D."/>
            <person name="McCloskey J.C."/>
            <person name="Pearson R."/>
            <person name="Stantripop S."/>
            <person name="Tiongson E.E."/>
            <person name="Tran J.T."/>
            <person name="Tsurgeon C."/>
            <person name="Vogt J.L."/>
            <person name="Walker M.A."/>
            <person name="Wetherby K.D."/>
            <person name="Wiggins L.S."/>
            <person name="Young A.C."/>
            <person name="Zhang L.-H."/>
            <person name="Osoegawa K."/>
            <person name="Zhu B."/>
            <person name="Zhao B."/>
            <person name="Shu C.L."/>
            <person name="De Jong P.J."/>
            <person name="Lawrence C.E."/>
            <person name="Smit A.F."/>
            <person name="Chakravarti A."/>
            <person name="Haussler D."/>
            <person name="Green P."/>
            <person name="Miller W."/>
            <person name="Green E.D."/>
        </authorList>
    </citation>
    <scope>NUCLEOTIDE SEQUENCE [LARGE SCALE GENOMIC DNA]</scope>
</reference>
<reference key="3">
    <citation type="journal article" date="2004" name="Genome Res.">
        <title>The status, quality, and expansion of the NIH full-length cDNA project: the Mammalian Gene Collection (MGC).</title>
        <authorList>
            <consortium name="The MGC Project Team"/>
        </authorList>
    </citation>
    <scope>NUCLEOTIDE SEQUENCE [LARGE SCALE MRNA]</scope>
    <source>
        <tissue>Prostate</tissue>
    </source>
</reference>
<reference key="4">
    <citation type="journal article" date="2006" name="J. Vet. Sci.">
        <title>Immunohistochemical study of caveolin-1 and -2 in the rat retina.</title>
        <authorList>
            <person name="Kim H."/>
            <person name="Lee T."/>
            <person name="Lee J."/>
            <person name="Ahn M."/>
            <person name="Moon C."/>
            <person name="Wie M.B."/>
            <person name="Shin T."/>
        </authorList>
    </citation>
    <scope>TISSUE SPECIFICITY</scope>
</reference>
<reference key="5">
    <citation type="journal article" date="2009" name="J. Cell. Mol. Med.">
        <title>Identification of pY19-caveolin-2 as a positive regulator of insulin-stimulated actin cytoskeleton-dependent mitogenesis.</title>
        <authorList>
            <person name="Kwon H."/>
            <person name="Jeong K."/>
            <person name="Pak Y."/>
        </authorList>
    </citation>
    <scope>PHOSPHORYLATION AT TYR-19</scope>
    <scope>INTERACTION WITH MAPK1 AND INSR</scope>
    <scope>FUNCTION</scope>
    <scope>SUBCELLULAR LOCATION</scope>
    <scope>MUTAGENESIS OF TYR-19</scope>
</reference>
<reference key="6">
    <citation type="journal article" date="2009" name="Biochim. Biophys. Acta">
        <title>Caveolin-2 regulation of STAT3 transcriptional activation in response to insulin.</title>
        <authorList>
            <person name="Kwon H."/>
            <person name="Jeong K."/>
            <person name="Hwang E.M."/>
            <person name="Park J.-Y."/>
            <person name="Hong S.-G."/>
            <person name="Choi W.-S."/>
            <person name="Pak Y."/>
        </authorList>
    </citation>
    <scope>PHOSPHORYLATION AT TYR-19 AND TYR-27</scope>
    <scope>INTERACTION WITH MAPK1 AND STAT3</scope>
    <scope>FUNCTION</scope>
    <scope>SUBCELLULAR LOCATION</scope>
    <scope>MUTAGENESIS OF TYR-19 AND TYR-27</scope>
</reference>
<proteinExistence type="evidence at protein level"/>
<keyword id="KW-1003">Cell membrane</keyword>
<keyword id="KW-0963">Cytoplasm</keyword>
<keyword id="KW-0333">Golgi apparatus</keyword>
<keyword id="KW-0472">Membrane</keyword>
<keyword id="KW-0539">Nucleus</keyword>
<keyword id="KW-0597">Phosphoprotein</keyword>
<keyword id="KW-1185">Reference proteome</keyword>
<comment type="function">
    <text evidence="6 7">May act as a scaffolding protein within caveolar membranes. Interacts directly with G-protein alpha subunits and can functionally regulate their activity. Acts as an accessory protein in conjunction with CAV1 in targeting to lipid rafts and driving caveolae formation. The Ser-36 phosphorylated form has a role in modulating mitosis in endothelial cells. Positive regulator of cellular mitogenesis of the MAPK signaling pathway. Required for the insulin-stimulated nuclear translocation and activation of MAPK1 and STAT3, and the subsequent regulation of cell cycle progression.</text>
</comment>
<comment type="subunit">
    <text evidence="1 6 7">Monomer or homodimer (By similarity). Interacts with CAV1; the interaction forms a stable heterooligomeric complex that is required for targeting to lipid rafts and for caveolae formation. Tyrosine phosphorylated forms do not form heterooligomers with the Tyr-19-phosphorylated form existing as a monomer or dimer and the Tyr-27-form as a monomer only. Interacts (tyrosine phosphorylated form) with the SH2 domain-containing proteins, RASA1, NCK1 and SRC. Interacts (tyrosine phosphorylated form) with INSR; the interaction (Tyr-27-phosphorylated form) is increased on insulin stimulation. Interacts (Tyr-19-phosphorylated form) with MAPK1 (phosphorylated form); the interaction, promoted by insulin, leads to nuclear location and MAPK1 activation. Interacts with STAT3; the interaction is increased on insulin-induced tyrosine phosphorylation leading to STAT activation.</text>
</comment>
<comment type="subcellular location">
    <subcellularLocation>
        <location>Nucleus</location>
    </subcellularLocation>
    <subcellularLocation>
        <location>Cytoplasm</location>
    </subcellularLocation>
    <subcellularLocation>
        <location>Golgi apparatus membrane</location>
        <topology>Peripheral membrane protein</topology>
    </subcellularLocation>
    <subcellularLocation>
        <location>Cell membrane</location>
        <topology>Peripheral membrane protein</topology>
    </subcellularLocation>
    <subcellularLocation>
        <location>Membrane</location>
        <location>Caveola</location>
        <topology>Peripheral membrane protein</topology>
    </subcellularLocation>
    <text evidence="1">Potential hairpin-like structure in the membrane. Membrane protein of caveolae. Tyr-19-phosphorylated form is enriched at sites of cell-cell contact and, in response to insulin, is translocated to the nucleus in complex with MAPK1. Tyr-27-phosphorylated form is located both in the cytoplasm and plasma membrane. The CAV1-mediated Ser-23-phosphorylated form locates to the plasma membrane. The Ser-36-phosphorylated form resides in intracellular compartments (By similarity).</text>
</comment>
<comment type="tissue specificity">
    <text evidence="5">In the retina, mainly expressed in vessels, but also diffuse expression in the inner and outer plexiform layers and in the inner nuclear layer.</text>
</comment>
<comment type="PTM">
    <text evidence="1 6 7">Phosphorylated on serine and tyrosine residues. CAV1 promotes phosphorylation on Ser-23 which targets the complex to the plasma membrane, lipid rafts and caveolae. Phosphorylation on Ser-36 appears to modulate mitosis in endothelial cells (By similarity). Phosphorylation on both Tyr-19 and Tyr-27 is required for insulin-induced 'Ser-727' phosphorylation of STAT3 and its activation. Phosphorylation on Tyr-19 is required for insulin-induced phosphorylation of MAPK1 and DNA binding of STAT3. Tyrosine phosphorylation is induced by both EGF and insulin.</text>
</comment>
<comment type="similarity">
    <text evidence="8">Belongs to the caveolin family.</text>
</comment>
<evidence type="ECO:0000250" key="1"/>
<evidence type="ECO:0000250" key="2">
    <source>
        <dbReference type="UniProtKB" id="P51636"/>
    </source>
</evidence>
<evidence type="ECO:0000250" key="3">
    <source>
        <dbReference type="UniProtKB" id="Q9WVC3"/>
    </source>
</evidence>
<evidence type="ECO:0000255" key="4"/>
<evidence type="ECO:0000269" key="5">
    <source>
    </source>
</evidence>
<evidence type="ECO:0000269" key="6">
    <source>
    </source>
</evidence>
<evidence type="ECO:0000269" key="7">
    <source>
    </source>
</evidence>
<evidence type="ECO:0000305" key="8"/>
<feature type="chain" id="PRO_0000385179" description="Caveolin-2">
    <location>
        <begin position="1"/>
        <end position="162"/>
    </location>
</feature>
<feature type="topological domain" description="Cytoplasmic" evidence="4">
    <location>
        <begin position="1"/>
        <end position="86"/>
    </location>
</feature>
<feature type="intramembrane region" description="Helical" evidence="4">
    <location>
        <begin position="87"/>
        <end position="107"/>
    </location>
</feature>
<feature type="topological domain" description="Cytoplasmic" evidence="4">
    <location>
        <begin position="108"/>
        <end position="162"/>
    </location>
</feature>
<feature type="modified residue" description="Phosphotyrosine; by SRC" evidence="6 7">
    <location>
        <position position="19"/>
    </location>
</feature>
<feature type="modified residue" description="Phosphoserine" evidence="3">
    <location>
        <position position="20"/>
    </location>
</feature>
<feature type="modified residue" description="Phosphoserine" evidence="2">
    <location>
        <position position="23"/>
    </location>
</feature>
<feature type="modified residue" description="Phosphotyrosine; by SRC" evidence="6">
    <location>
        <position position="27"/>
    </location>
</feature>
<feature type="modified residue" description="Phosphoserine" evidence="2">
    <location>
        <position position="36"/>
    </location>
</feature>
<feature type="mutagenesis site" description="Abolishes phosphorylation, insulin-stimulated interaction with phosphorylated MAPK1, MAPK1 nuclear translocation and activation, reduction of insulin-induced DNA binding of STAT3 but no effect on 'S-727' phosphorylation of STAT3. Completely abolishes phosphorylation, decreases insulin-induced DNA binding and impairs nuclear location of STAT3, inhibits insulin-induced 'S-727' phosphorylation of STAT3, and eliminates binding to RASA1, SRC and NCK1; when associated with A-27." evidence="6 7">
    <original>Y</original>
    <variation>A</variation>
    <location>
        <position position="19"/>
    </location>
</feature>
<feature type="mutagenesis site" description="Abolishes phosphorylation and insulin-induced nuclear location, but no effect on insulin-induced 'S-727' phosphorylation of STAT3 nor on MAPK1 phosphorylation. Completely abolishes insulin-induced phosphorylation, nuclear location, nuclear translocation of MAPK1 and STAT3 and 'S-727' phosphorylation of STAT3 and MAPK1 phosphorylation; when associated with A-19." evidence="6">
    <original>Y</original>
    <variation>A</variation>
    <location>
        <position position="27"/>
    </location>
</feature>
<feature type="sequence conflict" description="In Ref. 2; AAR16307." evidence="8" ref="2">
    <original>T</original>
    <variation>A</variation>
    <location>
        <position position="28"/>
    </location>
</feature>
<feature type="sequence conflict" description="In Ref. 1; AAL33581." evidence="8" ref="1">
    <original>D</original>
    <variation>G</variation>
    <location>
        <position position="29"/>
    </location>
</feature>
<feature type="sequence conflict" description="In Ref. 1; AAL33581." evidence="8" ref="1">
    <original>M</original>
    <variation>V</variation>
    <location>
        <position position="124"/>
    </location>
</feature>
<feature type="sequence conflict" description="In Ref. 1; AAL33581." evidence="8" ref="1">
    <original>D</original>
    <variation>N</variation>
    <location>
        <position position="162"/>
    </location>
</feature>
<accession>Q2IBC5</accession>
<accession>Q6P6R8</accession>
<accession>Q8VIK7</accession>
<gene>
    <name type="primary">Cav2</name>
</gene>
<sequence>MGLETEKADVQLFMADDAYSHHSVVDYTDPEKYVDSSQDRDPHQLNSHLKLGFEDLIAEPPTTHSFDKVWICSHALFEISKYVIYKFLTVFLAIPLAFIAGILFATLSCLHIWILMPFVKTCLMVLPSVQTIWKSVTDVVIGPLCTSVGRIFSSVSMQLSHD</sequence>
<organism>
    <name type="scientific">Rattus norvegicus</name>
    <name type="common">Rat</name>
    <dbReference type="NCBI Taxonomy" id="10116"/>
    <lineage>
        <taxon>Eukaryota</taxon>
        <taxon>Metazoa</taxon>
        <taxon>Chordata</taxon>
        <taxon>Craniata</taxon>
        <taxon>Vertebrata</taxon>
        <taxon>Euteleostomi</taxon>
        <taxon>Mammalia</taxon>
        <taxon>Eutheria</taxon>
        <taxon>Euarchontoglires</taxon>
        <taxon>Glires</taxon>
        <taxon>Rodentia</taxon>
        <taxon>Myomorpha</taxon>
        <taxon>Muroidea</taxon>
        <taxon>Muridae</taxon>
        <taxon>Murinae</taxon>
        <taxon>Rattus</taxon>
    </lineage>
</organism>